<feature type="chain" id="PRO_0000147339" description="GTP cyclohydrolase 1 type 2 homolog">
    <location>
        <begin position="1"/>
        <end position="262"/>
    </location>
</feature>
<feature type="binding site" evidence="1">
    <location>
        <position position="65"/>
    </location>
    <ligand>
        <name>a divalent metal cation</name>
        <dbReference type="ChEBI" id="CHEBI:60240"/>
        <label>2</label>
    </ligand>
</feature>
<feature type="binding site" evidence="1">
    <location>
        <position position="102"/>
    </location>
    <ligand>
        <name>a divalent metal cation</name>
        <dbReference type="ChEBI" id="CHEBI:60240"/>
        <label>1</label>
    </ligand>
</feature>
<feature type="binding site" evidence="1">
    <location>
        <position position="222"/>
    </location>
    <ligand>
        <name>a divalent metal cation</name>
        <dbReference type="ChEBI" id="CHEBI:60240"/>
        <label>2</label>
    </ligand>
</feature>
<feature type="binding site" evidence="1">
    <location>
        <position position="225"/>
    </location>
    <ligand>
        <name>a divalent metal cation</name>
        <dbReference type="ChEBI" id="CHEBI:60240"/>
        <label>1</label>
    </ligand>
</feature>
<feature type="binding site" evidence="1">
    <location>
        <position position="225"/>
    </location>
    <ligand>
        <name>a divalent metal cation</name>
        <dbReference type="ChEBI" id="CHEBI:60240"/>
        <label>2</label>
    </ligand>
</feature>
<sequence length="262" mass="29302">MKAKILIDAYEAFCPLDLSMEGDVKGLQMGSLDKDIRKVMITLDIRESTVAEAIKNEVDLIITKHAPIFKPLKDLVSSPQRDILLDLVKHDISVYVSHTNIDIVPGGLNDWFCDLLEIKEATYLSETKEGFGIGRIGTVKEQALEELASKVKRVFDLDTVRLIRYDKENPLISKIAICGGSGGEFYQDAVQKGADVYITGDIYYHTAQEMLTEGLFAVDPGHHIEVLFTEKLKEKLQGWKEENGWDVSIISSKASTNPFSHL</sequence>
<proteinExistence type="inferred from homology"/>
<evidence type="ECO:0000250" key="1">
    <source>
        <dbReference type="UniProtKB" id="P0AFP6"/>
    </source>
</evidence>
<evidence type="ECO:0000305" key="2"/>
<organism>
    <name type="scientific">Streptococcus pyogenes serotype M6 (strain ATCC BAA-946 / MGAS10394)</name>
    <dbReference type="NCBI Taxonomy" id="286636"/>
    <lineage>
        <taxon>Bacteria</taxon>
        <taxon>Bacillati</taxon>
        <taxon>Bacillota</taxon>
        <taxon>Bacilli</taxon>
        <taxon>Lactobacillales</taxon>
        <taxon>Streptococcaceae</taxon>
        <taxon>Streptococcus</taxon>
    </lineage>
</organism>
<dbReference type="EMBL" id="CP000003">
    <property type="protein sequence ID" value="AAT86893.1"/>
    <property type="status" value="ALT_INIT"/>
    <property type="molecule type" value="Genomic_DNA"/>
</dbReference>
<dbReference type="RefSeq" id="WP_021340480.1">
    <property type="nucleotide sequence ID" value="NC_006086.1"/>
</dbReference>
<dbReference type="SMR" id="Q5XCH0"/>
<dbReference type="KEGG" id="spa:M6_Spy0758"/>
<dbReference type="HOGENOM" id="CLU_037423_2_0_9"/>
<dbReference type="Proteomes" id="UP000001167">
    <property type="component" value="Chromosome"/>
</dbReference>
<dbReference type="GO" id="GO:0005737">
    <property type="term" value="C:cytoplasm"/>
    <property type="evidence" value="ECO:0007669"/>
    <property type="project" value="TreeGrafter"/>
</dbReference>
<dbReference type="GO" id="GO:0046872">
    <property type="term" value="F:metal ion binding"/>
    <property type="evidence" value="ECO:0007669"/>
    <property type="project" value="UniProtKB-KW"/>
</dbReference>
<dbReference type="FunFam" id="3.40.1390.30:FF:000006">
    <property type="entry name" value="Dinuclear metal center protein, YbgI family"/>
    <property type="match status" value="1"/>
</dbReference>
<dbReference type="Gene3D" id="3.40.1390.30">
    <property type="entry name" value="NIF3 (NGG1p interacting factor 3)-like"/>
    <property type="match status" value="2"/>
</dbReference>
<dbReference type="InterPro" id="IPR002678">
    <property type="entry name" value="DUF34/NIF3"/>
</dbReference>
<dbReference type="InterPro" id="IPR036069">
    <property type="entry name" value="DUF34/NIF3_sf"/>
</dbReference>
<dbReference type="NCBIfam" id="TIGR00486">
    <property type="entry name" value="YbgI_SA1388"/>
    <property type="match status" value="1"/>
</dbReference>
<dbReference type="PANTHER" id="PTHR13799:SF14">
    <property type="entry name" value="GTP CYCLOHYDROLASE 1 TYPE 2 HOMOLOG"/>
    <property type="match status" value="1"/>
</dbReference>
<dbReference type="PANTHER" id="PTHR13799">
    <property type="entry name" value="NGG1 INTERACTING FACTOR 3"/>
    <property type="match status" value="1"/>
</dbReference>
<dbReference type="Pfam" id="PF01784">
    <property type="entry name" value="DUF34_NIF3"/>
    <property type="match status" value="1"/>
</dbReference>
<dbReference type="SUPFAM" id="SSF102705">
    <property type="entry name" value="NIF3 (NGG1p interacting factor 3)-like"/>
    <property type="match status" value="1"/>
</dbReference>
<gene>
    <name type="ordered locus">M6_Spy0758</name>
</gene>
<reference key="1">
    <citation type="journal article" date="2004" name="J. Infect. Dis.">
        <title>Progress toward characterization of the group A Streptococcus metagenome: complete genome sequence of a macrolide-resistant serotype M6 strain.</title>
        <authorList>
            <person name="Banks D.J."/>
            <person name="Porcella S.F."/>
            <person name="Barbian K.D."/>
            <person name="Beres S.B."/>
            <person name="Philips L.E."/>
            <person name="Voyich J.M."/>
            <person name="DeLeo F.R."/>
            <person name="Martin J.M."/>
            <person name="Somerville G.A."/>
            <person name="Musser J.M."/>
        </authorList>
    </citation>
    <scope>NUCLEOTIDE SEQUENCE [LARGE SCALE GENOMIC DNA]</scope>
    <source>
        <strain>ATCC BAA-946 / MGAS10394</strain>
    </source>
</reference>
<accession>Q5XCH0</accession>
<keyword id="KW-0479">Metal-binding</keyword>
<name>GCH1L_STRP6</name>
<comment type="subunit">
    <text evidence="1">Homohexamer.</text>
</comment>
<comment type="similarity">
    <text evidence="2">Belongs to the GTP cyclohydrolase I type 2/NIF3 family.</text>
</comment>
<comment type="sequence caution" evidence="2">
    <conflict type="erroneous initiation">
        <sequence resource="EMBL-CDS" id="AAT86893"/>
    </conflict>
</comment>
<protein>
    <recommendedName>
        <fullName>GTP cyclohydrolase 1 type 2 homolog</fullName>
    </recommendedName>
</protein>